<dbReference type="EMBL" id="AE005674">
    <property type="protein sequence ID" value="AAN45551.1"/>
    <property type="molecule type" value="Genomic_DNA"/>
</dbReference>
<dbReference type="EMBL" id="AE014073">
    <property type="protein sequence ID" value="AAP18639.1"/>
    <property type="molecule type" value="Genomic_DNA"/>
</dbReference>
<dbReference type="RefSeq" id="NP_709844.1">
    <property type="nucleotide sequence ID" value="NC_004337.2"/>
</dbReference>
<dbReference type="RefSeq" id="WP_000832580.1">
    <property type="nucleotide sequence ID" value="NZ_WPGW01000075.1"/>
</dbReference>
<dbReference type="SMR" id="Q83P94"/>
<dbReference type="STRING" id="198214.SF4127"/>
<dbReference type="PaxDb" id="198214-SF4127"/>
<dbReference type="GeneID" id="1027384"/>
<dbReference type="KEGG" id="sfl:SF4127"/>
<dbReference type="KEGG" id="sfx:S3594"/>
<dbReference type="PATRIC" id="fig|198214.7.peg.4869"/>
<dbReference type="HOGENOM" id="CLU_018808_8_3_6"/>
<dbReference type="Proteomes" id="UP000001006">
    <property type="component" value="Chromosome"/>
</dbReference>
<dbReference type="Proteomes" id="UP000002673">
    <property type="component" value="Chromosome"/>
</dbReference>
<dbReference type="GO" id="GO:0005886">
    <property type="term" value="C:plasma membrane"/>
    <property type="evidence" value="ECO:0007669"/>
    <property type="project" value="UniProtKB-SubCell"/>
</dbReference>
<dbReference type="GO" id="GO:0015123">
    <property type="term" value="F:acetate transmembrane transporter activity"/>
    <property type="evidence" value="ECO:0007669"/>
    <property type="project" value="UniProtKB-UniRule"/>
</dbReference>
<dbReference type="GO" id="GO:0043879">
    <property type="term" value="F:glycolate transmembrane transporter activity"/>
    <property type="evidence" value="ECO:0007669"/>
    <property type="project" value="InterPro"/>
</dbReference>
<dbReference type="GO" id="GO:0015293">
    <property type="term" value="F:symporter activity"/>
    <property type="evidence" value="ECO:0007669"/>
    <property type="project" value="UniProtKB-KW"/>
</dbReference>
<dbReference type="GO" id="GO:0006847">
    <property type="term" value="P:plasma membrane acetate transport"/>
    <property type="evidence" value="ECO:0007669"/>
    <property type="project" value="TreeGrafter"/>
</dbReference>
<dbReference type="GO" id="GO:0006814">
    <property type="term" value="P:sodium ion transport"/>
    <property type="evidence" value="ECO:0007669"/>
    <property type="project" value="UniProtKB-KW"/>
</dbReference>
<dbReference type="CDD" id="cd11480">
    <property type="entry name" value="SLC5sbd_u4"/>
    <property type="match status" value="1"/>
</dbReference>
<dbReference type="FunFam" id="1.20.1730.10:FF:000001">
    <property type="entry name" value="Cation/acetate symporter ActP"/>
    <property type="match status" value="1"/>
</dbReference>
<dbReference type="Gene3D" id="1.20.1730.10">
    <property type="entry name" value="Sodium/glucose cotransporter"/>
    <property type="match status" value="1"/>
</dbReference>
<dbReference type="HAMAP" id="MF_01426">
    <property type="entry name" value="Acet_symport_ActP"/>
    <property type="match status" value="1"/>
</dbReference>
<dbReference type="InterPro" id="IPR014083">
    <property type="entry name" value="Cation/Ac_symporter_ActP"/>
</dbReference>
<dbReference type="InterPro" id="IPR038377">
    <property type="entry name" value="Na/Glc_symporter_sf"/>
</dbReference>
<dbReference type="InterPro" id="IPR001734">
    <property type="entry name" value="Na/solute_symporter"/>
</dbReference>
<dbReference type="InterPro" id="IPR018212">
    <property type="entry name" value="Na/solute_symporter_CS"/>
</dbReference>
<dbReference type="InterPro" id="IPR050277">
    <property type="entry name" value="Sodium:Solute_Symporter"/>
</dbReference>
<dbReference type="NCBIfam" id="NF006903">
    <property type="entry name" value="PRK09395.1"/>
    <property type="match status" value="1"/>
</dbReference>
<dbReference type="NCBIfam" id="NF009135">
    <property type="entry name" value="PRK12488.1"/>
    <property type="match status" value="1"/>
</dbReference>
<dbReference type="NCBIfam" id="TIGR00813">
    <property type="entry name" value="sss"/>
    <property type="match status" value="1"/>
</dbReference>
<dbReference type="NCBIfam" id="TIGR02711">
    <property type="entry name" value="symport_actP"/>
    <property type="match status" value="1"/>
</dbReference>
<dbReference type="PANTHER" id="PTHR48086:SF6">
    <property type="entry name" value="CATION_ACETATE SYMPORTER ACTP"/>
    <property type="match status" value="1"/>
</dbReference>
<dbReference type="PANTHER" id="PTHR48086">
    <property type="entry name" value="SODIUM/PROLINE SYMPORTER-RELATED"/>
    <property type="match status" value="1"/>
</dbReference>
<dbReference type="Pfam" id="PF00474">
    <property type="entry name" value="SSF"/>
    <property type="match status" value="1"/>
</dbReference>
<dbReference type="PROSITE" id="PS00456">
    <property type="entry name" value="NA_SOLUT_SYMP_1"/>
    <property type="match status" value="1"/>
</dbReference>
<dbReference type="PROSITE" id="PS00457">
    <property type="entry name" value="NA_SOLUT_SYMP_2"/>
    <property type="match status" value="1"/>
</dbReference>
<dbReference type="PROSITE" id="PS50283">
    <property type="entry name" value="NA_SOLUT_SYMP_3"/>
    <property type="match status" value="1"/>
</dbReference>
<protein>
    <recommendedName>
        <fullName>Cation/acetate symporter ActP</fullName>
    </recommendedName>
    <alternativeName>
        <fullName>Acetate permease</fullName>
    </alternativeName>
    <alternativeName>
        <fullName>Acetate transporter ActP</fullName>
    </alternativeName>
</protein>
<proteinExistence type="inferred from homology"/>
<comment type="function">
    <text evidence="1">Transports acetate.</text>
</comment>
<comment type="subcellular location">
    <subcellularLocation>
        <location evidence="1">Cell inner membrane</location>
        <topology evidence="1">Multi-pass membrane protein</topology>
    </subcellularLocation>
</comment>
<comment type="similarity">
    <text evidence="3">Belongs to the sodium:solute symporter (SSF) (TC 2.A.21) family.</text>
</comment>
<feature type="chain" id="PRO_0000105415" description="Cation/acetate symporter ActP">
    <location>
        <begin position="1"/>
        <end position="549"/>
    </location>
</feature>
<feature type="topological domain" description="Periplasmic" evidence="2">
    <location>
        <begin position="1"/>
        <end position="32"/>
    </location>
</feature>
<feature type="transmembrane region" description="Helical" evidence="2">
    <location>
        <begin position="33"/>
        <end position="55"/>
    </location>
</feature>
<feature type="topological domain" description="Cytoplasmic" evidence="2">
    <location>
        <begin position="56"/>
        <end position="75"/>
    </location>
</feature>
<feature type="transmembrane region" description="Helical" evidence="2">
    <location>
        <begin position="76"/>
        <end position="98"/>
    </location>
</feature>
<feature type="topological domain" description="Periplasmic" evidence="2">
    <location>
        <begin position="99"/>
        <end position="102"/>
    </location>
</feature>
<feature type="transmembrane region" description="Helical" evidence="2">
    <location>
        <begin position="103"/>
        <end position="125"/>
    </location>
</feature>
<feature type="topological domain" description="Cytoplasmic" evidence="2">
    <location>
        <begin position="126"/>
        <end position="145"/>
    </location>
</feature>
<feature type="transmembrane region" description="Helical" evidence="2">
    <location>
        <begin position="146"/>
        <end position="168"/>
    </location>
</feature>
<feature type="topological domain" description="Periplasmic" evidence="2">
    <location>
        <begin position="169"/>
        <end position="182"/>
    </location>
</feature>
<feature type="transmembrane region" description="Helical" evidence="2">
    <location>
        <begin position="183"/>
        <end position="205"/>
    </location>
</feature>
<feature type="topological domain" description="Cytoplasmic" evidence="2">
    <location>
        <begin position="206"/>
        <end position="211"/>
    </location>
</feature>
<feature type="transmembrane region" description="Helical" evidence="2">
    <location>
        <begin position="212"/>
        <end position="234"/>
    </location>
</feature>
<feature type="topological domain" description="Periplasmic" evidence="2">
    <location>
        <begin position="235"/>
        <end position="260"/>
    </location>
</feature>
<feature type="transmembrane region" description="Helical" evidence="2">
    <location>
        <begin position="261"/>
        <end position="283"/>
    </location>
</feature>
<feature type="topological domain" description="Cytoplasmic" evidence="2">
    <location>
        <begin position="284"/>
        <end position="302"/>
    </location>
</feature>
<feature type="transmembrane region" description="Helical" evidence="2">
    <location>
        <begin position="303"/>
        <end position="325"/>
    </location>
</feature>
<feature type="topological domain" description="Periplasmic" evidence="2">
    <location>
        <begin position="326"/>
        <end position="349"/>
    </location>
</feature>
<feature type="transmembrane region" description="Helical" evidence="2">
    <location>
        <begin position="350"/>
        <end position="372"/>
    </location>
</feature>
<feature type="topological domain" description="Cytoplasmic" evidence="2">
    <location>
        <begin position="373"/>
        <end position="401"/>
    </location>
</feature>
<feature type="transmembrane region" description="Helical" evidence="2">
    <location>
        <begin position="402"/>
        <end position="424"/>
    </location>
</feature>
<feature type="topological domain" description="Periplasmic" evidence="2">
    <location>
        <begin position="425"/>
        <end position="427"/>
    </location>
</feature>
<feature type="transmembrane region" description="Helical" evidence="2">
    <location>
        <begin position="428"/>
        <end position="450"/>
    </location>
</feature>
<feature type="topological domain" description="Cytoplasmic" evidence="2">
    <location>
        <begin position="451"/>
        <end position="461"/>
    </location>
</feature>
<feature type="transmembrane region" description="Helical" evidence="2">
    <location>
        <begin position="462"/>
        <end position="484"/>
    </location>
</feature>
<feature type="topological domain" description="Periplasmic" evidence="2">
    <location>
        <begin position="485"/>
        <end position="493"/>
    </location>
</feature>
<feature type="transmembrane region" description="Helical" evidence="2">
    <location>
        <begin position="494"/>
        <end position="516"/>
    </location>
</feature>
<feature type="topological domain" description="Cytoplasmic" evidence="2">
    <location>
        <begin position="517"/>
        <end position="549"/>
    </location>
</feature>
<accession>Q83P94</accession>
<accession>Q7BZL0</accession>
<name>ACTP_SHIFL</name>
<evidence type="ECO:0000250" key="1"/>
<evidence type="ECO:0000255" key="2"/>
<evidence type="ECO:0000305" key="3"/>
<keyword id="KW-0997">Cell inner membrane</keyword>
<keyword id="KW-1003">Cell membrane</keyword>
<keyword id="KW-0406">Ion transport</keyword>
<keyword id="KW-0472">Membrane</keyword>
<keyword id="KW-1185">Reference proteome</keyword>
<keyword id="KW-0915">Sodium</keyword>
<keyword id="KW-0739">Sodium transport</keyword>
<keyword id="KW-0769">Symport</keyword>
<keyword id="KW-0812">Transmembrane</keyword>
<keyword id="KW-1133">Transmembrane helix</keyword>
<keyword id="KW-0813">Transport</keyword>
<organism>
    <name type="scientific">Shigella flexneri</name>
    <dbReference type="NCBI Taxonomy" id="623"/>
    <lineage>
        <taxon>Bacteria</taxon>
        <taxon>Pseudomonadati</taxon>
        <taxon>Pseudomonadota</taxon>
        <taxon>Gammaproteobacteria</taxon>
        <taxon>Enterobacterales</taxon>
        <taxon>Enterobacteriaceae</taxon>
        <taxon>Shigella</taxon>
    </lineage>
</organism>
<reference key="1">
    <citation type="journal article" date="2002" name="Nucleic Acids Res.">
        <title>Genome sequence of Shigella flexneri 2a: insights into pathogenicity through comparison with genomes of Escherichia coli K12 and O157.</title>
        <authorList>
            <person name="Jin Q."/>
            <person name="Yuan Z."/>
            <person name="Xu J."/>
            <person name="Wang Y."/>
            <person name="Shen Y."/>
            <person name="Lu W."/>
            <person name="Wang J."/>
            <person name="Liu H."/>
            <person name="Yang J."/>
            <person name="Yang F."/>
            <person name="Zhang X."/>
            <person name="Zhang J."/>
            <person name="Yang G."/>
            <person name="Wu H."/>
            <person name="Qu D."/>
            <person name="Dong J."/>
            <person name="Sun L."/>
            <person name="Xue Y."/>
            <person name="Zhao A."/>
            <person name="Gao Y."/>
            <person name="Zhu J."/>
            <person name="Kan B."/>
            <person name="Ding K."/>
            <person name="Chen S."/>
            <person name="Cheng H."/>
            <person name="Yao Z."/>
            <person name="He B."/>
            <person name="Chen R."/>
            <person name="Ma D."/>
            <person name="Qiang B."/>
            <person name="Wen Y."/>
            <person name="Hou Y."/>
            <person name="Yu J."/>
        </authorList>
    </citation>
    <scope>NUCLEOTIDE SEQUENCE [LARGE SCALE GENOMIC DNA]</scope>
    <source>
        <strain>301 / Serotype 2a</strain>
    </source>
</reference>
<reference key="2">
    <citation type="journal article" date="2003" name="Infect. Immun.">
        <title>Complete genome sequence and comparative genomics of Shigella flexneri serotype 2a strain 2457T.</title>
        <authorList>
            <person name="Wei J."/>
            <person name="Goldberg M.B."/>
            <person name="Burland V."/>
            <person name="Venkatesan M.M."/>
            <person name="Deng W."/>
            <person name="Fournier G."/>
            <person name="Mayhew G.F."/>
            <person name="Plunkett G. III"/>
            <person name="Rose D.J."/>
            <person name="Darling A."/>
            <person name="Mau B."/>
            <person name="Perna N.T."/>
            <person name="Payne S.M."/>
            <person name="Runyen-Janecky L.J."/>
            <person name="Zhou S."/>
            <person name="Schwartz D.C."/>
            <person name="Blattner F.R."/>
        </authorList>
    </citation>
    <scope>NUCLEOTIDE SEQUENCE [LARGE SCALE GENOMIC DNA]</scope>
    <source>
        <strain>ATCC 700930 / 2457T / Serotype 2a</strain>
    </source>
</reference>
<sequence length="549" mass="59163">MKRVLTALAATLPFAANAADAISGAVERQPTNWQAIIMFLIFVVFTLGITYWASKRVRSRSDYYTAGGNITGFQNGLAIAGDYMSAASFLGISALVFTSGYDGLIYSLGFLVGWPIILFLIAERLRNLGRYTSADVASYRLKQGPIRILSACGSLVVVALYLIAQMVGAGKLIELLFGLNYHIAVVLVGVLMMMYVLFGGMLATTWVQIIKAVLLLFGASFMAFMVMKHVGFSFNNLFSEAMAVHPKGVDIMKPGGLVKDPISALSLGLGLMFGTAGLPHILMRFFTVSDAREARKSVFYATGFMGYFYILTFIIGFGAIMLVGANPEYKDAAGHLIGGNNMAAVHLANAVGGNLFLGFISAVAFATILAVVADLTLAGASAVSHDLYANVFKKGATEREELRVSKITVLILGVIAIILGVLFENQNIAFMVGLAFAIAASCNFPIILLSMYWSKLTTRGAMLGGWLGLITAVVLMILGPTIWVQILGHEKAIFPYEYPALFSISVAFLGIWFFSATDNSAEGARERELFRAQFIRSQTGFGVEQGRAH</sequence>
<gene>
    <name type="primary">actP</name>
    <name type="ordered locus">SF4127</name>
    <name type="ordered locus">S3594</name>
</gene>